<reference key="1">
    <citation type="journal article" date="2006" name="J. Virol.">
        <title>Characterization of a torovirus main proteinase.</title>
        <authorList>
            <person name="Smits S.L."/>
            <person name="Snijder E.J."/>
            <person name="de Groot R.J."/>
        </authorList>
    </citation>
    <scope>NUCLEOTIDE SEQUENCE [GENOMIC RNA] OF 1-4569</scope>
    <scope>CHARACTERIZATION OF 3C-LIKE PROTEINASE M-PRO</scope>
    <scope>PROTEOLYTIC PROCESSING (REPLICASE POLYPROTEIN 1A)</scope>
</reference>
<reference key="2">
    <citation type="journal article" date="1991" name="J. Gen. Virol.">
        <title>Characterization of defective interfering RNAs of Berne virus.</title>
        <authorList>
            <person name="Snijder E.J."/>
            <person name="den Boon J.A."/>
            <person name="Horzinek M.C."/>
            <person name="Spaan J.M."/>
        </authorList>
    </citation>
    <scope>NUCLEOTIDE SEQUENCE [GENOMIC RNA] OF 1-252</scope>
</reference>
<reference key="3">
    <citation type="journal article" date="1990" name="Nucleic Acids Res.">
        <title>The carboxyl-terminal part of the putative Berne virus polymerase is expressed by ribosomal frameshifting and contains sequence motifs which indicate that toro- and coronaviruses are evolutionarily related.</title>
        <authorList>
            <person name="Snijder E.J."/>
            <person name="den Boon J.A."/>
            <person name="Bredenbeek P.J."/>
            <person name="Horzinek M.C."/>
            <person name="Rijnbrand R."/>
            <person name="Spaan W.J.M."/>
        </authorList>
    </citation>
    <scope>NUCLEOTIDE SEQUENCE [GENOMIC RNA] OF 4219-6857</scope>
    <source>
        <strain>Isolate P138/72</strain>
    </source>
</reference>
<reference key="4">
    <citation type="journal article" date="2021" name="Viruses">
        <title>Recent Progress in Torovirus Molecular Biology.</title>
        <authorList>
            <person name="Ujike M."/>
            <person name="Taguchi F."/>
        </authorList>
    </citation>
    <scope>DOMAIN (3C-LIKE SERINE PROTEINASE)</scope>
    <scope>CATALYTIC ACTIVITY (3C-LIKE SERINE PROTEINASE)</scope>
    <scope>FUNCTION (3C-LIKE SERINE PROTEINASE)</scope>
    <scope>ACTIVE SITE (3C-LIKE SERINE PROTEINASE)</scope>
    <scope>MUTAGENESIS OF HIS-3304; GLU-3347 AND SER-3416</scope>
</reference>
<keyword id="KW-0067">ATP-binding</keyword>
<keyword id="KW-0255">Endonuclease</keyword>
<keyword id="KW-0269">Exonuclease</keyword>
<keyword id="KW-0347">Helicase</keyword>
<keyword id="KW-1043">Host membrane</keyword>
<keyword id="KW-0378">Hydrolase</keyword>
<keyword id="KW-0472">Membrane</keyword>
<keyword id="KW-0479">Metal-binding</keyword>
<keyword id="KW-0489">Methyltransferase</keyword>
<keyword id="KW-0540">Nuclease</keyword>
<keyword id="KW-0547">Nucleotide-binding</keyword>
<keyword id="KW-0548">Nucleotidyltransferase</keyword>
<keyword id="KW-0645">Protease</keyword>
<keyword id="KW-0677">Repeat</keyword>
<keyword id="KW-0688">Ribosomal frameshifting</keyword>
<keyword id="KW-0696">RNA-directed RNA polymerase</keyword>
<keyword id="KW-0720">Serine protease</keyword>
<keyword id="KW-0788">Thiol protease</keyword>
<keyword id="KW-0808">Transferase</keyword>
<keyword id="KW-0812">Transmembrane</keyword>
<keyword id="KW-1133">Transmembrane helix</keyword>
<keyword id="KW-0693">Viral RNA replication</keyword>
<keyword id="KW-0862">Zinc</keyword>
<keyword id="KW-0863">Zinc-finger</keyword>
<comment type="function">
    <molecule>3C-like serine proteinase</molecule>
    <text evidence="12">The 3C-like serine proteinase is responsible for the majority of cleavages.</text>
</comment>
<comment type="function">
    <molecule>Helicase</molecule>
    <text evidence="1">The helicase which contains a zinc finger structure displays RNA and DNA duplex-unwinding activities with 5' to 3' polarity.</text>
</comment>
<comment type="function">
    <molecule>Exoribonuclease</molecule>
    <text evidence="1">Acts on both ssRNA and dsRNA in a 3' to 5' direction.</text>
</comment>
<comment type="function">
    <molecule>Uridylate-specific endoribonuclease</molecule>
    <text evidence="1">NendoU is a Mn(2+)-dependent, uridylate-specific enzyme, which leaves 2'-3'-cyclic phosphates 5' to the cleaved bond.</text>
</comment>
<comment type="catalytic activity">
    <molecule>RNA-directed RNA polymerase</molecule>
    <reaction evidence="5">
        <text>RNA(n) + a ribonucleoside 5'-triphosphate = RNA(n+1) + diphosphate</text>
        <dbReference type="Rhea" id="RHEA:21248"/>
        <dbReference type="Rhea" id="RHEA-COMP:14527"/>
        <dbReference type="Rhea" id="RHEA-COMP:17342"/>
        <dbReference type="ChEBI" id="CHEBI:33019"/>
        <dbReference type="ChEBI" id="CHEBI:61557"/>
        <dbReference type="ChEBI" id="CHEBI:140395"/>
        <dbReference type="EC" id="2.7.7.48"/>
    </reaction>
</comment>
<comment type="catalytic activity">
    <molecule>Helicase</molecule>
    <reaction>
        <text>ATP + H2O = ADP + phosphate + H(+)</text>
        <dbReference type="Rhea" id="RHEA:13065"/>
        <dbReference type="ChEBI" id="CHEBI:15377"/>
        <dbReference type="ChEBI" id="CHEBI:15378"/>
        <dbReference type="ChEBI" id="CHEBI:30616"/>
        <dbReference type="ChEBI" id="CHEBI:43474"/>
        <dbReference type="ChEBI" id="CHEBI:456216"/>
        <dbReference type="EC" id="3.6.4.12"/>
    </reaction>
</comment>
<comment type="catalytic activity">
    <molecule>Helicase</molecule>
    <reaction>
        <text>ATP + H2O = ADP + phosphate + H(+)</text>
        <dbReference type="Rhea" id="RHEA:13065"/>
        <dbReference type="ChEBI" id="CHEBI:15377"/>
        <dbReference type="ChEBI" id="CHEBI:15378"/>
        <dbReference type="ChEBI" id="CHEBI:30616"/>
        <dbReference type="ChEBI" id="CHEBI:43474"/>
        <dbReference type="ChEBI" id="CHEBI:456216"/>
        <dbReference type="EC" id="3.6.4.13"/>
    </reaction>
</comment>
<comment type="subcellular location">
    <molecule>Putative papain-like proteinase</molecule>
    <subcellularLocation>
        <location evidence="14">Host membrane</location>
        <topology evidence="14">Multi-pass membrane protein</topology>
    </subcellularLocation>
</comment>
<comment type="subcellular location">
    <molecule>Non-structural protein 2</molecule>
    <subcellularLocation>
        <location evidence="14">Host membrane</location>
        <topology evidence="14">Multi-pass membrane protein</topology>
    </subcellularLocation>
</comment>
<comment type="subcellular location">
    <molecule>Non-structural protein 4</molecule>
    <subcellularLocation>
        <location evidence="14">Host membrane</location>
        <topology evidence="14">Multi-pass membrane protein</topology>
    </subcellularLocation>
</comment>
<comment type="alternative products">
    <event type="ribosomal frameshifting"/>
    <isoform>
        <id>P0C6V7-1</id>
        <name>Replicase polyprotein 1ab</name>
        <name>pp1ab</name>
        <sequence type="displayed"/>
    </isoform>
    <isoform>
        <id>P0C6F3-1</id>
        <name>Replicase polyprotein 1a</name>
        <name>pp1a</name>
        <name>ORF1a polyprotein</name>
        <sequence type="external"/>
    </isoform>
</comment>
<comment type="domain">
    <text evidence="1">The hydrophobic domains (HD) could mediate the membrane association of the replication complex and thereby alter the architecture of the host cell membrane.</text>
</comment>
<comment type="PTM">
    <molecule>Isoform Replicase polyprotein 1ab</molecule>
    <text evidence="12">Specific enzymatic cleavages in vivo by its own protease yield mature proteins. 3CL-PRO is autocatalytically processed.</text>
</comment>
<comment type="miscellaneous">
    <molecule>Isoform Replicase polyprotein 1ab</molecule>
    <text>Produced by -1 ribosomal frameshifting at the 1a-1b genes boundary.</text>
</comment>
<comment type="sequence caution" evidence="14">
    <conflict type="erroneous gene model prediction">
        <sequence resource="EMBL-CDS" id="CAA36600"/>
    </conflict>
</comment>
<comment type="sequence caution" evidence="14">
    <conflict type="erroneous gene model prediction">
        <sequence resource="EMBL-CDS" id="CAA36601"/>
    </conflict>
</comment>
<organismHost>
    <name type="scientific">Equus caballus</name>
    <name type="common">Horse</name>
    <dbReference type="NCBI Taxonomy" id="9796"/>
</organismHost>
<organism>
    <name type="scientific">Berne virus</name>
    <name type="common">BEV</name>
    <dbReference type="NCBI Taxonomy" id="11156"/>
    <lineage>
        <taxon>Viruses</taxon>
        <taxon>Riboviria</taxon>
        <taxon>Orthornavirae</taxon>
        <taxon>Pisuviricota</taxon>
        <taxon>Pisoniviricetes</taxon>
        <taxon>Nidovirales</taxon>
        <taxon>Tornidovirineae</taxon>
        <taxon>Tobaniviridae</taxon>
        <taxon>Torovirinae</taxon>
        <taxon>Torovirus</taxon>
        <taxon>Renitovirus</taxon>
        <taxon>Equine torovirus</taxon>
    </lineage>
</organism>
<dbReference type="EC" id="3.4.22.-"/>
<dbReference type="EC" id="3.4.21.-"/>
<dbReference type="EC" id="2.7.7.48"/>
<dbReference type="EC" id="3.6.4.12"/>
<dbReference type="EC" id="3.6.4.13"/>
<dbReference type="EC" id="3.1.13.-" evidence="2"/>
<dbReference type="EC" id="3.1.-.-"/>
<dbReference type="EC" id="2.1.1.-"/>
<dbReference type="EMBL" id="DQ310701">
    <property type="protein sequence ID" value="ABC26008.1"/>
    <property type="molecule type" value="Genomic_RNA"/>
</dbReference>
<dbReference type="EMBL" id="X56016">
    <property type="protein sequence ID" value="CAA39493.1"/>
    <property type="molecule type" value="Genomic_RNA"/>
</dbReference>
<dbReference type="EMBL" id="X52374">
    <property type="protein sequence ID" value="CAA36600.1"/>
    <property type="status" value="ALT_SEQ"/>
    <property type="molecule type" value="Genomic_RNA"/>
</dbReference>
<dbReference type="EMBL" id="X52374">
    <property type="protein sequence ID" value="CAA36601.1"/>
    <property type="status" value="ALT_SEQ"/>
    <property type="molecule type" value="Genomic_RNA"/>
</dbReference>
<dbReference type="PIR" id="S11237">
    <property type="entry name" value="S11237"/>
</dbReference>
<dbReference type="PIR" id="S11238">
    <property type="entry name" value="S11238"/>
</dbReference>
<dbReference type="Proteomes" id="UP000006571">
    <property type="component" value="Genome"/>
</dbReference>
<dbReference type="GO" id="GO:0033644">
    <property type="term" value="C:host cell membrane"/>
    <property type="evidence" value="ECO:0007669"/>
    <property type="project" value="UniProtKB-SubCell"/>
</dbReference>
<dbReference type="GO" id="GO:0016020">
    <property type="term" value="C:membrane"/>
    <property type="evidence" value="ECO:0007669"/>
    <property type="project" value="UniProtKB-KW"/>
</dbReference>
<dbReference type="GO" id="GO:0000175">
    <property type="term" value="F:3'-5'-RNA exonuclease activity"/>
    <property type="evidence" value="ECO:0007669"/>
    <property type="project" value="InterPro"/>
</dbReference>
<dbReference type="GO" id="GO:0005524">
    <property type="term" value="F:ATP binding"/>
    <property type="evidence" value="ECO:0007669"/>
    <property type="project" value="UniProtKB-KW"/>
</dbReference>
<dbReference type="GO" id="GO:0016887">
    <property type="term" value="F:ATP hydrolysis activity"/>
    <property type="evidence" value="ECO:0007669"/>
    <property type="project" value="RHEA"/>
</dbReference>
<dbReference type="GO" id="GO:0008234">
    <property type="term" value="F:cysteine-type peptidase activity"/>
    <property type="evidence" value="ECO:0007669"/>
    <property type="project" value="UniProtKB-KW"/>
</dbReference>
<dbReference type="GO" id="GO:0004519">
    <property type="term" value="F:endonuclease activity"/>
    <property type="evidence" value="ECO:0007669"/>
    <property type="project" value="UniProtKB-KW"/>
</dbReference>
<dbReference type="GO" id="GO:0004483">
    <property type="term" value="F:mRNA (nucleoside-2'-O-)-methyltransferase activity"/>
    <property type="evidence" value="ECO:0007669"/>
    <property type="project" value="InterPro"/>
</dbReference>
<dbReference type="GO" id="GO:0003723">
    <property type="term" value="F:RNA binding"/>
    <property type="evidence" value="ECO:0007669"/>
    <property type="project" value="InterPro"/>
</dbReference>
<dbReference type="GO" id="GO:0003724">
    <property type="term" value="F:RNA helicase activity"/>
    <property type="evidence" value="ECO:0007669"/>
    <property type="project" value="UniProtKB-EC"/>
</dbReference>
<dbReference type="GO" id="GO:0003968">
    <property type="term" value="F:RNA-directed RNA polymerase activity"/>
    <property type="evidence" value="ECO:0007669"/>
    <property type="project" value="UniProtKB-KW"/>
</dbReference>
<dbReference type="GO" id="GO:0008236">
    <property type="term" value="F:serine-type peptidase activity"/>
    <property type="evidence" value="ECO:0007669"/>
    <property type="project" value="UniProtKB-KW"/>
</dbReference>
<dbReference type="GO" id="GO:0008270">
    <property type="term" value="F:zinc ion binding"/>
    <property type="evidence" value="ECO:0007669"/>
    <property type="project" value="UniProtKB-KW"/>
</dbReference>
<dbReference type="GO" id="GO:0006351">
    <property type="term" value="P:DNA-templated transcription"/>
    <property type="evidence" value="ECO:0007669"/>
    <property type="project" value="InterPro"/>
</dbReference>
<dbReference type="GO" id="GO:0032259">
    <property type="term" value="P:methylation"/>
    <property type="evidence" value="ECO:0007669"/>
    <property type="project" value="UniProtKB-KW"/>
</dbReference>
<dbReference type="GO" id="GO:0006508">
    <property type="term" value="P:proteolysis"/>
    <property type="evidence" value="ECO:0007669"/>
    <property type="project" value="UniProtKB-KW"/>
</dbReference>
<dbReference type="GO" id="GO:0039694">
    <property type="term" value="P:viral RNA genome replication"/>
    <property type="evidence" value="ECO:0007669"/>
    <property type="project" value="InterPro"/>
</dbReference>
<dbReference type="GO" id="GO:0075523">
    <property type="term" value="P:viral translational frameshifting"/>
    <property type="evidence" value="ECO:0007669"/>
    <property type="project" value="UniProtKB-KW"/>
</dbReference>
<dbReference type="CDD" id="cd20762">
    <property type="entry name" value="capping_2-OMTase_Nidovirales"/>
    <property type="match status" value="1"/>
</dbReference>
<dbReference type="CDD" id="cd21557">
    <property type="entry name" value="Macro_X_Nsp3-like"/>
    <property type="match status" value="1"/>
</dbReference>
<dbReference type="CDD" id="cd21162">
    <property type="entry name" value="NendoU_tv_PToV-like"/>
    <property type="match status" value="1"/>
</dbReference>
<dbReference type="CDD" id="cd23186">
    <property type="entry name" value="Tobaniviridae_RdRp"/>
    <property type="match status" value="1"/>
</dbReference>
<dbReference type="CDD" id="cd21413">
    <property type="entry name" value="unc_tv_SF1_Hel-like"/>
    <property type="match status" value="1"/>
</dbReference>
<dbReference type="CDD" id="cd21403">
    <property type="entry name" value="ZBD_tv_SF1_Hel-like"/>
    <property type="match status" value="1"/>
</dbReference>
<dbReference type="Gene3D" id="3.90.1140.10">
    <property type="entry name" value="Cyclic phosphodiesterase"/>
    <property type="match status" value="1"/>
</dbReference>
<dbReference type="Gene3D" id="3.40.220.10">
    <property type="entry name" value="Leucine Aminopeptidase, subunit E, domain 1"/>
    <property type="match status" value="1"/>
</dbReference>
<dbReference type="Gene3D" id="3.40.50.300">
    <property type="entry name" value="P-loop containing nucleotide triphosphate hydrolases"/>
    <property type="match status" value="2"/>
</dbReference>
<dbReference type="Gene3D" id="2.40.10.10">
    <property type="entry name" value="Trypsin-like serine proteases"/>
    <property type="match status" value="2"/>
</dbReference>
<dbReference type="Gene3D" id="3.40.50.150">
    <property type="entry name" value="Vaccinia Virus protein VP39"/>
    <property type="match status" value="1"/>
</dbReference>
<dbReference type="InterPro" id="IPR027351">
    <property type="entry name" value="(+)RNA_virus_helicase_core_dom"/>
</dbReference>
<dbReference type="InterPro" id="IPR043502">
    <property type="entry name" value="DNA/RNA_pol_sf"/>
</dbReference>
<dbReference type="InterPro" id="IPR037227">
    <property type="entry name" value="EndoU-like"/>
</dbReference>
<dbReference type="InterPro" id="IPR002589">
    <property type="entry name" value="Macro_dom"/>
</dbReference>
<dbReference type="InterPro" id="IPR043472">
    <property type="entry name" value="Macro_dom-like"/>
</dbReference>
<dbReference type="InterPro" id="IPR044371">
    <property type="entry name" value="Macro_X_NSP3-like"/>
</dbReference>
<dbReference type="InterPro" id="IPR043609">
    <property type="entry name" value="NendoU_nidovirus"/>
</dbReference>
<dbReference type="InterPro" id="IPR044397">
    <property type="entry name" value="NendoU_PToV-like"/>
</dbReference>
<dbReference type="InterPro" id="IPR044863">
    <property type="entry name" value="NIRAN"/>
</dbReference>
<dbReference type="InterPro" id="IPR046438">
    <property type="entry name" value="NIV_2_O_MTASE"/>
</dbReference>
<dbReference type="InterPro" id="IPR046436">
    <property type="entry name" value="NIV_EXON"/>
</dbReference>
<dbReference type="InterPro" id="IPR039573">
    <property type="entry name" value="NS2A-like"/>
</dbReference>
<dbReference type="InterPro" id="IPR027352">
    <property type="entry name" value="NSP13_ZBD_CoV-like"/>
</dbReference>
<dbReference type="InterPro" id="IPR009461">
    <property type="entry name" value="NSP16_CoV-like"/>
</dbReference>
<dbReference type="InterPro" id="IPR027417">
    <property type="entry name" value="P-loop_NTPase"/>
</dbReference>
<dbReference type="InterPro" id="IPR038765">
    <property type="entry name" value="Papain-like_cys_pep_sf"/>
</dbReference>
<dbReference type="InterPro" id="IPR009003">
    <property type="entry name" value="Peptidase_S1_PA"/>
</dbReference>
<dbReference type="InterPro" id="IPR043504">
    <property type="entry name" value="Peptidase_S1_PA_chymotrypsin"/>
</dbReference>
<dbReference type="InterPro" id="IPR001205">
    <property type="entry name" value="RNA-dir_pol_C"/>
</dbReference>
<dbReference type="InterPro" id="IPR007094">
    <property type="entry name" value="RNA-dir_pol_PSvirus"/>
</dbReference>
<dbReference type="InterPro" id="IPR029063">
    <property type="entry name" value="SAM-dependent_MTases_sf"/>
</dbReference>
<dbReference type="InterPro" id="IPR044355">
    <property type="entry name" value="SF1_Hel_unc_tv"/>
</dbReference>
<dbReference type="InterPro" id="IPR044336">
    <property type="entry name" value="SF1_Hel_ZBD_tv"/>
</dbReference>
<dbReference type="Pfam" id="PF13245">
    <property type="entry name" value="AAA_19"/>
    <property type="match status" value="1"/>
</dbReference>
<dbReference type="Pfam" id="PF05213">
    <property type="entry name" value="Corona_NS2A"/>
    <property type="match status" value="1"/>
</dbReference>
<dbReference type="Pfam" id="PF19215">
    <property type="entry name" value="CoV_NSP15_C"/>
    <property type="match status" value="1"/>
</dbReference>
<dbReference type="Pfam" id="PF01661">
    <property type="entry name" value="Macro"/>
    <property type="match status" value="1"/>
</dbReference>
<dbReference type="Pfam" id="PF00680">
    <property type="entry name" value="RdRP_1"/>
    <property type="match status" value="1"/>
</dbReference>
<dbReference type="SMART" id="SM00506">
    <property type="entry name" value="A1pp"/>
    <property type="match status" value="1"/>
</dbReference>
<dbReference type="SUPFAM" id="SSF54001">
    <property type="entry name" value="Cysteine proteinases"/>
    <property type="match status" value="1"/>
</dbReference>
<dbReference type="SUPFAM" id="SSF56672">
    <property type="entry name" value="DNA/RNA polymerases"/>
    <property type="match status" value="1"/>
</dbReference>
<dbReference type="SUPFAM" id="SSF142877">
    <property type="entry name" value="EndoU-like"/>
    <property type="match status" value="1"/>
</dbReference>
<dbReference type="SUPFAM" id="SSF52949">
    <property type="entry name" value="Macro domain-like"/>
    <property type="match status" value="1"/>
</dbReference>
<dbReference type="SUPFAM" id="SSF52540">
    <property type="entry name" value="P-loop containing nucleoside triphosphate hydrolases"/>
    <property type="match status" value="1"/>
</dbReference>
<dbReference type="SUPFAM" id="SSF50494">
    <property type="entry name" value="Trypsin-like serine proteases"/>
    <property type="match status" value="1"/>
</dbReference>
<dbReference type="PROSITE" id="PS51653">
    <property type="entry name" value="CV_ZBD"/>
    <property type="match status" value="1"/>
</dbReference>
<dbReference type="PROSITE" id="PS51154">
    <property type="entry name" value="MACRO"/>
    <property type="match status" value="1"/>
</dbReference>
<dbReference type="PROSITE" id="PS51958">
    <property type="entry name" value="NENDOU"/>
    <property type="match status" value="1"/>
</dbReference>
<dbReference type="PROSITE" id="PS51947">
    <property type="entry name" value="NIRAN"/>
    <property type="match status" value="1"/>
</dbReference>
<dbReference type="PROSITE" id="PS51955">
    <property type="entry name" value="NIV_2_O_MTASE"/>
    <property type="match status" value="1"/>
</dbReference>
<dbReference type="PROSITE" id="PS51953">
    <property type="entry name" value="NIV_EXON"/>
    <property type="match status" value="1"/>
</dbReference>
<dbReference type="PROSITE" id="PS51657">
    <property type="entry name" value="PSRV_HELICASE"/>
    <property type="match status" value="1"/>
</dbReference>
<dbReference type="PROSITE" id="PS50507">
    <property type="entry name" value="RDRP_SSRNA_POS"/>
    <property type="match status" value="1"/>
</dbReference>
<evidence type="ECO:0000250" key="1"/>
<evidence type="ECO:0000250" key="2">
    <source>
        <dbReference type="UniProtKB" id="Q008X6"/>
    </source>
</evidence>
<evidence type="ECO:0000255" key="3"/>
<evidence type="ECO:0000255" key="4">
    <source>
        <dbReference type="PROSITE-ProRule" id="PRU00490"/>
    </source>
</evidence>
<evidence type="ECO:0000255" key="5">
    <source>
        <dbReference type="PROSITE-ProRule" id="PRU00539"/>
    </source>
</evidence>
<evidence type="ECO:0000255" key="6">
    <source>
        <dbReference type="PROSITE-ProRule" id="PRU00986"/>
    </source>
</evidence>
<evidence type="ECO:0000255" key="7">
    <source>
        <dbReference type="PROSITE-ProRule" id="PRU01292"/>
    </source>
</evidence>
<evidence type="ECO:0000255" key="8">
    <source>
        <dbReference type="PROSITE-ProRule" id="PRU01298"/>
    </source>
</evidence>
<evidence type="ECO:0000255" key="9">
    <source>
        <dbReference type="PROSITE-ProRule" id="PRU01300"/>
    </source>
</evidence>
<evidence type="ECO:0000255" key="10">
    <source>
        <dbReference type="PROSITE-ProRule" id="PRU01303"/>
    </source>
</evidence>
<evidence type="ECO:0000256" key="11">
    <source>
        <dbReference type="SAM" id="MobiDB-lite"/>
    </source>
</evidence>
<evidence type="ECO:0000269" key="12">
    <source>
    </source>
</evidence>
<evidence type="ECO:0000303" key="13">
    <source>
    </source>
</evidence>
<evidence type="ECO:0000305" key="14"/>
<evidence type="ECO:0000305" key="15">
    <source>
    </source>
</evidence>
<protein>
    <recommendedName>
        <fullName>Replicase polyprotein 1ab</fullName>
        <shortName>pp1ab</shortName>
    </recommendedName>
    <alternativeName>
        <fullName>ORF1ab polyprotein</fullName>
    </alternativeName>
    <component>
        <recommendedName>
            <fullName>Putative papain-like proteinase</fullName>
            <shortName evidence="13">PL-PRO</shortName>
            <ecNumber>3.4.22.-</ecNumber>
        </recommendedName>
        <alternativeName>
            <fullName>Non-structural protein 1</fullName>
            <shortName>nsp1</shortName>
        </alternativeName>
    </component>
    <component>
        <recommendedName>
            <fullName>Non-structural protein 2</fullName>
            <shortName>nsp2</shortName>
        </recommendedName>
    </component>
    <component>
        <recommendedName>
            <fullName>3C-like serine proteinase</fullName>
            <shortName>3CLSP</shortName>
            <ecNumber>3.4.21.-</ecNumber>
        </recommendedName>
        <alternativeName>
            <fullName>M-PRO</fullName>
        </alternativeName>
        <alternativeName>
            <fullName>nsp3</fullName>
        </alternativeName>
        <alternativeName>
            <fullName>p27</fullName>
        </alternativeName>
    </component>
    <component>
        <recommendedName>
            <fullName>Non-structural protein 4</fullName>
            <shortName>nsp4</shortName>
        </recommendedName>
    </component>
    <component>
        <recommendedName>
            <fullName>Non-structural protein 5</fullName>
            <shortName>nsp5</shortName>
        </recommendedName>
    </component>
    <component>
        <recommendedName>
            <fullName>Non-structural protein 6</fullName>
            <shortName>nsp6</shortName>
        </recommendedName>
    </component>
    <component>
        <recommendedName>
            <fullName>Non-structural protein 7</fullName>
            <shortName>nsp7</shortName>
        </recommendedName>
    </component>
    <component>
        <recommendedName>
            <fullName>Non-structural protein 8</fullName>
            <shortName>nsp8</shortName>
        </recommendedName>
    </component>
    <component>
        <recommendedName>
            <fullName>RNA-directed RNA polymerase</fullName>
            <shortName>Pol</shortName>
            <shortName>RdRp</shortName>
            <ecNumber>2.7.7.48</ecNumber>
        </recommendedName>
        <alternativeName>
            <fullName>nsp10</fullName>
        </alternativeName>
        <alternativeName>
            <fullName>p100</fullName>
        </alternativeName>
    </component>
    <component>
        <recommendedName>
            <fullName>Helicase</fullName>
            <shortName>Hel</shortName>
            <ecNumber>3.6.4.12</ecNumber>
            <ecNumber>3.6.4.13</ecNumber>
        </recommendedName>
        <alternativeName>
            <fullName>nsp11</fullName>
        </alternativeName>
        <alternativeName>
            <fullName>p67</fullName>
        </alternativeName>
    </component>
    <component>
        <recommendedName>
            <fullName>Exoribonuclease</fullName>
            <shortName>ExoN</shortName>
            <ecNumber evidence="2">3.1.13.-</ecNumber>
        </recommendedName>
        <alternativeName>
            <fullName>nsp12</fullName>
        </alternativeName>
    </component>
    <component>
        <recommendedName>
            <fullName>Non-structural protein 13</fullName>
            <shortName>nsp13</shortName>
        </recommendedName>
    </component>
    <component>
        <recommendedName>
            <fullName>Uridylate-specific endoribonuclease</fullName>
            <ecNumber>3.1.-.-</ecNumber>
        </recommendedName>
        <alternativeName>
            <fullName>NendoU</fullName>
        </alternativeName>
        <alternativeName>
            <fullName>nsp14</fullName>
        </alternativeName>
    </component>
    <component>
        <recommendedName>
            <fullName>Putative 2'-O-methyl transferase</fullName>
            <ecNumber>2.1.1.-</ecNumber>
        </recommendedName>
        <alternativeName>
            <fullName>nsp15</fullName>
        </alternativeName>
    </component>
</protein>
<proteinExistence type="evidence at protein level"/>
<gene>
    <name type="primary">rep</name>
    <name type="ORF">1a-1b</name>
</gene>
<name>R1AB_BEV</name>
<sequence length="6857" mass="784289">MSTSSSILDIPSKMFRILKNNTRETEQHLSSSTLDLISKSQLLAQCFDTQEIMASLSKTVRSILESQNLEHKSTLTPYNSSQSLQLLVMNTSCTQFKWTTGSTSSVKALLEKELCRGLVPLNDITPKSNYVELSLLTPSILIGNETSTTTTLPEIPLDMEQSIISCVENTLLKEVQALSGQESCQEYFLSANYQSLIPPQVLLNLMKMSSVVDLSPLTLPNTRLWLKLSPFHGGTSVSYATQIKGYANCARREEKCLKNRLTKKQKNQEKGSFDARSVITLGGKMYRYKVVVLRCEDQSDNLSELQFEPQVEYTMDMVPHCWKELVKKRLIRAKGTWDLSCVEDLDLDHVEVRGDSLLHRSSVVHDLTSIVDDTLQEKLFSRTWLRQSLKYSGNILQRLSSLFATEGLKKITLVNSDITPVQVGDKWLNFVDFGKSTVFFVKTLNNIHLAMTRQRESCNYIHEKFGRVRWLGAKPEQGAIVKVFAWCLNKKEFKFRDNQLKQYVCRQGVIKHEPCEYLNVEVLDEFVALNNDLNCVQKIKTYLAAYFGLKKVKLTQKNFMTPLITKKQELVFQPCNCPNHQFYVAQFDKHVTLGLGRKDGILFAEQVPSYAIILAVGFGTVETQLVTHYYSEMRRVYHPLDFQSNTFVFDHQGVMLEDISPADYNDVGEEDYQLEYSGGFDQPFQNYHSDDEDQAFPDFEDERHPDEENWARPIISSGESSVVSSRPSSPLVYSSLVPVASPFGYMNGIRVFDICLADDLDFLQIHGQCPCARCKGLYFYQPIRPRGFTIFENVVEFFSFVEKCEVFEEIGPFFKMIEYSMLYNEYNIFYGLGKKIYQSDLVLPVKHLDQLWKRAQLDIDVVSEFENFKNSLQNINNVVYIAPYFNDQGEWNDIFDGYEFNLNDNQFWFQAKPVYDLVCYIYQGFFSDSRPLEKLYQKLCLDYHTSAMLHTQTHLKYCYVALLHSERAFQMSINLDSLDNEQLHFLATMGMGDASLVGPTYLSEYHSNFNWYSIMSKACHYVKLEQLVGLTYQEKRLMILSRVQEFYEQQHRGPIQLILSPLKVVNLPPITCTEGYCYQPVTRLFDTCVMPDIMKKLSRKRTSVSDVFGILADYFKRTLSYRCFKVHEFCGIERQQEFSDMTTLKLVTDWCQDTYYFYNEYATMTDVEPKVQVSSDYYLKIPSEVVEHIRQFLPHNVNVGLMNYVSSNCDFDQCKFEFCLSGKGYVLGNMFFNRCAIQYVKTNLFIVLFKSRPLLYITQESIYLSDFNVLQAQCLTGEFCLDFEPVQGKTLFGVYFTNGQRYGQQWETLPRFSLKPLNSPRKRVPTQPFEELAEVCIFKQKLKLTQLHNDCSVTPRVCSIPQTITATFQPYYCLENFYGVKAPKVIVSGHLATHYVKLTHKISKCVLVTKLAVARAFYFTPTSMGSHYHLDPMEGISFGKRATVQFEPVGLIKDVNLLVYQFGSHVSIQFFPEAPCIVADGHYPSKYSGVWLGYLPSVEECKIAQVNHRVYVPTILRTSKSAPFHIIQNGDMGRGPITVTYHYAKNFDNKSLTPMFKMFQQVFEKSKDDIFKAFNTMSLEQKKVLSHFCGEFDEAYTLQTMSDEISFESSAYPDVVACSLAYILGYEMCLTVKVNAKNEKLDIGSQCERVFVDYDVKKNEWTLSPEEGEDSDDNLDLPFEQYYEFKIGQTNVVLVQDDFKSVFEFLKSEQGVDYVVNPANSQLKHGGGIAKVISCMCGPKLQAWSNNYITKNKTVPVTKAIKSPGFQLGKKVNIIHAVGPRVSDGDVFQKLDQAWRSVFDLCEDQHTILTSMLSTGIFGCTVNDSFNTFLSNVARLDKSLVVFVVTNMVEQYNQAFAVIKMYQQYHGLPNFGNTCWFNALYQLLKSFSEKEQCVNDLLNCFDDFYDCPTSQCVEWVCEQLGVQFGQQQDAVEMLMKVFDVFKCDVRVGFDCLSRLQQVNCGFCVEVPAQAVLMFSGKDQCGHWTAARKIVDKWYTFDDNHVVQKDPVWQNVVLVLRDRGIFRSADFERKPARRRRVSHRVPRDTLSQDAITYIEDLRFSSGTCLSRYFVESVESFVSGDNVSEVSDEQTCVEVAIEESDGHVEQICQSSVDCVGMPESFQFTFSMPLQTFVQECDQKCEDDFSQEHVECDQQFEPVEQVGQGGQQDGQVDQQIKESEQVVEPSAPSGQESPQALLQQVVDEVVYQIEQVKCDQKQDQDSVQCDEIEEINSRGEQTVQQQLQPILGHDLNENEGPTLSVGAGKLVRCRSLAVTESNLSTSNTIFVWSEVLTHQYIGFKTDLMGLTYNIKFKLICYVLFLWFGVLCCTSHNTPFYMRLCIYLVLLWLSLMIWNASQINVKTGWNELYVLKLLTSIKLPNIVKFRCELVQWFVLKCLFVSFYVYDYVVKVCVSIFQMPQLRPFTWPFIKLGFVDTFLSHHILAFPEKVANQSTLPTCGDKRYYVYVPSWCRASFTSLVMRARELTSTGRSKTLDNWHYQCCSKTAKPLSCFNVREFVFDQDCKHEAYGFLSSLCVYLLFYSGFLTFWLPLFCYYYVLFMCTFKNLPVDITKPIKWTVLQQVVNDVLSLVTKPLFGRPVCPPLTTYLTSTTADEAVKVSRSLLGRFCTPLGFQQPVMNVENGVTVSNFGFFNPLMWPLFVVVLLDNRFIWFFNVLSYVMMPVFVIILFYFYLKKICGCINFKGLSKCCTKHFNQFSKPLVAAGVHGNRTNFTYQPMQEHWCDRHSWYCPKEEHYMTPDMAVYIKNYYNLACAPTADLVWCDYTKSAPTMTWSNFKYSSYKAKETVLCAPSSHADSMLMAWYALLHNVRFTVNPNVVDLPPAVNTIYVSSDSEDSVQDKSQPDVKLRPKKPKGNFKKQSVAYFSREPVDIWYYTTLVIVMGVLFMFMYSCLMVGQYVVMPRDKFFGVNPTGYSYVNAPPYLHAAPPVLQNSDGMILATQLKVPSITYSVYRLLSGHLYFTKLIVSDNECTPPFGAARLSNEFSCNGFTYVLPAHLRFFNRYVMLIHPDQLHMLPFEVEYGSHTRVCYTTGSNSVECLPTFEIISPYVFVFIVVIFTVIFLILIRLYIVMYSYFKVFTYVVFKLLFVNIIMVLFVVCLPPLVPGVVFVLALWLCDSVMFLLYLAFLSLFILPWFYVLFFLFMVGGFVFWWMMRSADVVHLTTDGLTFNGTFEQISKCVFPLNPLIVNRMLLDCQMSHSDLVEKSKLKTTEGKLANEMMKVFMTGETSYYQPSNFSFQSVFSKATSPFTLHARPPMPMFKLYVHFTGSCVGSTSTGTGFAIDDNTIVTAKHLFEYDDLKPTHVSVEIVTRSHSARSASIIWKEPDVKGWTFKGENAYIQVENLKDFYIEDFKYLPFQQIEKDFYKRMEPVTIYSVKYGSEFATQAWQTVNGHFVCYNTEGGDSGAPLVCNGRIVGVHQGLCDNFKTTLASDFEGKMMTEVKGHHVDPPVYYKPIIISAAYNKFVAGEDSSVGDGKNYHKFENEDFACMCKELESVTFGDQLRRYCYNLPQFLEPLQYFHVPSFWQPFKKQSVSNNVSWVVEHLHFIFSIYFLICDFVAYWWLDDPFSVVLPLFFIVQLLSTVFLKNVLFWTTSYLITLAVTFYIHSEVAESMFLLGFLSDRVVNRMSLIIVVAIMCLFVVVRVVVNVKRAIFVFVVSVVLIFVHICLGIVQFNSFVNVVLFDVYAVFTALLTPQPVVAIIMLLLFDTKMLMSFAFIVIVLSFRVFKDYKFVKVLHNFCNFDFVLSQVSLFRYRHRNQGNDPTHYEALWLFLKELYYGIQDAKYEVFSPQAGSYNVKFLTDMTEQDQLEAVEQVQRRLQRFNIVQDKASPRLVLYSKTIEFIKDQIQQQRAVGANPFIITTLTSNDIGLDNVEVHNPANFKPEDLQAHMWFFSKSPVFIGQVPIPTNVQTAAVLDTTYNCQDLTADEKNNVAATLQIQNAAITLSLFEKCTQFLESELGEVPTLMWQAEDVADIKHLESQIENLRKVLDGMQFGTTEYKATRKQLNICQSQLDQAKAFERKLAKFLEKVDQQQAITNETAKQLSAFKNLVKQVYESYMSSLKVKVLEANDASCLLTSTDLPRKLVLMRPITGVDGIKIVEKANGCEITAFGTTFNTGHGSNLAGLAYSTTQPLSAYPFIFNLEGIFKQQANIGYKTVECNMSSHNGSVLYKGKVVAVPSDDNPDFVVCGKGYKLDCGINVLMIPSIVRYITLNLTDHLQKQSLKPRRRLQYRQQGVRLGGVNLGEHQAFSNELISTVGYTTWVSSTVCRDNTHKHPWFVQIPVNEKDPEWFMHNTQLKDNQWVVDLKPTHWLVNADTGEQLFALSLTDEQALKAEAILQKWSPITQDVECWFKDLKGYYTVSGFQPLWPVCPVNICNVRLDPVFKPQSIVYADDPTHFLSLPVVNKNFLAAFYDLQEGFPGKKQVAPHISLTMLKLSDEDIEKVEDILDEMVLPNSWVTITNPHMMGKHYVCDVEGLDSLHDEVVSVLREHGIACDQKRLWKPHLTIGELNDVSFDKFKDFAISCKLEDCDFVKLGAPKANARYEFITTLPLGDFKLLRGAWSACRHLCFQNGAYQSSRSKHYIDLATEYNAGIVKVNKSNTHSVEYQSKRFMIKRVKDQSEFALAKTAFLPSIIPHHMEKQNGEWFLIRGPTSQWSLGDLVYAIWLGDQDYLSECGFVFNPSRDEFLDDANQRSFLANLLEPAILNFSHIYWQVKMCKVPYKLTLDNVDLNGQLYDFGDYPCPNSVDNQSALFVLAEVWSMTRRPFPVAFARLLANEMEIPTDYQMFFQNILLSGSYLDKALCLNNVRPFLSDPANLTTTPFFSQHNGVWTHFYNPIYGLVECNLDEFAELPEVLQQLVTVQGPITNNMTPAISVGEGVYAANVPSASATKQKIPFYDVGLCQELTDAGVDCGEAFKYFYYLSNPAGALADVCYYDYQGTGFYSPKLLAGVYDFMKRVTECYRINERFTYEQAKPRKSSMGINITGYQQDAVYRALGPENIARLFEYAQKAPLPFCTKIITKFALSAKARARTVSSCSFIASTIFRFAHKPVTSKMVEVAQNSGGFCLIGVSKYGLKFSKFLKDKYGAIEGFDVFGSDYTKCDRTFPLSFRALTAALLYELGEWDEKSWLYLNEVNSYMLDTMLCDGMLLNKPGGTSSGDATTAHSNTFYNYMVHYVVAFKTILSDLSEGNKVMRIAAHNAYTTGDYQVFNTLLEDQFQTNYFLNFLSDDSFIFSKPEALKIFTCENFSNKLQTILHTKVDQTKSWSTKGHIEEFCSAHIIKTDGEYHFLPSRGRLLASLLILDKLSDVDIYYMRFVAILCESAVYSRYQPEFFNGLFQVFLDKVQQFRKDYCCDPCPPQLLEREFYENLVFTSNSEVGIVDCYLENFKLQCEFKQQANFDKVCFCCPNPAVSVCEECYVPLPLCAYCYYVHVVISNHSKVEDKFKCFCGQDNIRELYIVLNNSICMYQCKNCVESDRLRISLLSDVDQIVRLPGFKSNSASIAKNGVAQLLTSVDNVDVSLDWNYQESVQQNVARIVYHSANMTQMSIEVVYVSFTLVRNDGSSAILDIPNFKCPDTSYCLFYKPGKSGVLKFTGKGTLTSCYDNKNLTWFKVTCPDFNQPWRLATCFVIQQHDVVYPPIKATQYENVTFVMGPPGTGKTTFVYDTYLSKASSSNRFVYCAPTHRLVGDMDEKVDGAVVVSAYNDRTYRNPVWNKDDSYGVLLCTHNTLPFIKSAVLIADEVSLIPPHVMIKILSMGFKKVVLLGDPFQLSPVYKNHKVHFKYDTFYLLQLATQKRYLTACYRCPPQILSAFSKPYCDVGVDLVSFNNKPGKFDIIVSKQLANIQDFSVLSVLSKEYPGYVILVNYRAAVDYAMQNGLGDVTTIDSSQGTTAANHLLVLFGASNFSKTVNRVIVGCSRSTTHLVVVCCPELFKHFQPILNWPEPKYRYFGMEKQSDFNIIPEVSSLVFCDIEFWHYKADPNSKTRTVYPGQIAVVTSQTLQLYLGVFDDTGYKSALRGLPKDVYVPPNWVWMRKHYPSYEQHAYNMQRLFKFIIDTTFGQPWFILYSCSNDLKSLKFYVEFDTCYFCSCGEMAICLMRDGNYKCRNCYGGMLISKLVNCKYLDVQKERVKLQDAHDAICQQFHGDSHEALCDAVMTKCLYLASYEAAFKDTIHVKYKDLCLEIQYKITSSFVRYDSVHKRYLYRDHGAMYYFRTPRSPMQNVYKYEVGSHAEYSINICTSYEGCQSFGKTCTKCIHIHCIVEQFMADERFKEFILVSVVKSDYVEQALSPAAKALMLTVTKVEDKSFYISNGVRYDLYDYDLSKSVMRVVNSNVKPLPLYSVIVGLGINCTVGCVLPNVPMKLKDELLITDVPLSTLRLDLQTWYYISWPTLSNKNSRWKLAGAQVYDCSVHIYIEATGEQPLYYLQQGKGESLFELPDTLFSTGRLYNLDHDAAQNFNVKQLAIETMPNNHHVFSGDFTEVGTDIGGVHHVVALNGYKGSIIPNYVKPIATGLINVGRAVKRTTLVDVCANQLYEKVKQQLEGVKVSKVIFVNIDFQDVQFMVFANGEDDIQTFYPQKDFVRSYYEWPNILPQIESHYDLKNYGQNPTFMPQPVNFAKYTQICTFIQDHVKVARNALVWHLGAAGVDGCSPGDIVLSSFFKECLVYSWDIKDYSTLLDKHSYDCNFRPNLIVSDIYNVSSNVSEVLDDCVHRLALGGTIVFKTTESSRPDIQLSQFTKYFSAVQFFTAGVNTSSSEVFVVLKYKLYSEPIGEELCSPNILSRIAAYRNKLCIVPNFKVFSTSFSYKYSGVKFVQKCFYVSVPRQFCASGLIQEVPMLCQMEH</sequence>
<feature type="chain" id="PRO_0000106126" description="Replicase polyprotein 1ab">
    <location>
        <begin position="1"/>
        <end position="6857"/>
    </location>
</feature>
<feature type="chain" id="PRO_0000283842" description="Putative papain-like proteinase" evidence="3">
    <location>
        <begin position="1"/>
        <end position="2873"/>
    </location>
</feature>
<feature type="chain" id="PRO_0000283843" description="Non-structural protein 2" evidence="3">
    <location>
        <begin position="2874"/>
        <end position="3251"/>
    </location>
</feature>
<feature type="chain" id="PRO_0000283845" description="3C-like serine proteinase" evidence="3">
    <location>
        <begin position="3252"/>
        <end position="3543"/>
    </location>
</feature>
<feature type="chain" id="PRO_0000283846" description="Non-structural protein 4">
    <location>
        <begin position="3544"/>
        <end position="3802"/>
    </location>
</feature>
<feature type="chain" id="PRO_0000283847" description="Non-structural protein 5" evidence="3">
    <location>
        <begin position="3803"/>
        <end position="3979"/>
    </location>
</feature>
<feature type="chain" id="PRO_0000283848" description="Non-structural protein 6" evidence="3">
    <location>
        <begin position="3980"/>
        <end position="4161"/>
    </location>
</feature>
<feature type="chain" id="PRO_0000283849" description="Non-structural protein 7" evidence="3">
    <location>
        <begin position="4162"/>
        <end position="4246"/>
    </location>
</feature>
<feature type="chain" id="PRO_0000283850" description="Non-structural protein 8" evidence="3">
    <location>
        <begin position="4247"/>
        <end position="4399"/>
    </location>
</feature>
<feature type="chain" id="PRO_0000283851" description="RNA-directed RNA polymerase" evidence="3">
    <location>
        <begin position="4400"/>
        <end position="5410"/>
    </location>
</feature>
<feature type="chain" id="PRO_0000283852" description="Helicase" evidence="3">
    <location>
        <begin position="5411"/>
        <end position="5968"/>
    </location>
</feature>
<feature type="chain" id="PRO_0000283853" description="Exoribonuclease" evidence="3">
    <location>
        <begin position="5969"/>
        <end position="6298"/>
    </location>
</feature>
<feature type="chain" id="PRO_0000283854" description="Non-structural protein 13" evidence="3">
    <location>
        <begin position="6299"/>
        <end position="6442"/>
    </location>
</feature>
<feature type="chain" id="PRO_0000283855" description="Uridylate-specific endoribonuclease" evidence="3">
    <location>
        <begin position="6443"/>
        <end position="6592"/>
    </location>
</feature>
<feature type="chain" id="PRO_0000283856" description="Putative 2'-O-methyl transferase" evidence="3">
    <location>
        <begin position="6593"/>
        <end position="6857"/>
    </location>
</feature>
<feature type="transmembrane region" description="Helical" evidence="3">
    <location>
        <begin position="2303"/>
        <end position="2323"/>
    </location>
</feature>
<feature type="transmembrane region" description="Helical" evidence="3">
    <location>
        <begin position="2330"/>
        <end position="2350"/>
    </location>
</feature>
<feature type="transmembrane region" description="Helical" evidence="3">
    <location>
        <begin position="2385"/>
        <end position="2405"/>
    </location>
</feature>
<feature type="transmembrane region" description="Helical" evidence="3">
    <location>
        <begin position="2535"/>
        <end position="2555"/>
    </location>
</feature>
<feature type="transmembrane region" description="Helical" evidence="3">
    <location>
        <begin position="2639"/>
        <end position="2659"/>
    </location>
</feature>
<feature type="transmembrane region" description="Helical" evidence="3">
    <location>
        <begin position="2664"/>
        <end position="2684"/>
    </location>
</feature>
<feature type="transmembrane region" description="Helical" evidence="3">
    <location>
        <begin position="2889"/>
        <end position="2909"/>
    </location>
</feature>
<feature type="transmembrane region" description="Helical" evidence="3">
    <location>
        <begin position="3057"/>
        <end position="3077"/>
    </location>
</feature>
<feature type="transmembrane region" description="Helical" evidence="3">
    <location>
        <begin position="3106"/>
        <end position="3126"/>
    </location>
</feature>
<feature type="transmembrane region" description="Helical" evidence="3">
    <location>
        <begin position="3142"/>
        <end position="3162"/>
    </location>
</feature>
<feature type="transmembrane region" description="Helical" evidence="3">
    <location>
        <begin position="3556"/>
        <end position="3575"/>
    </location>
</feature>
<feature type="transmembrane region" description="Helical" evidence="3">
    <location>
        <begin position="3580"/>
        <end position="3602"/>
    </location>
</feature>
<feature type="transmembrane region" description="Helical" evidence="3">
    <location>
        <begin position="3611"/>
        <end position="3631"/>
    </location>
</feature>
<feature type="transmembrane region" description="Helical" evidence="3">
    <location>
        <begin position="3640"/>
        <end position="3660"/>
    </location>
</feature>
<feature type="transmembrane region" description="Helical" evidence="3">
    <location>
        <begin position="3663"/>
        <end position="3683"/>
    </location>
</feature>
<feature type="transmembrane region" description="Helical" evidence="3">
    <location>
        <begin position="3698"/>
        <end position="3718"/>
    </location>
</feature>
<feature type="transmembrane region" description="Helical" evidence="3">
    <location>
        <begin position="3723"/>
        <end position="3738"/>
    </location>
</feature>
<feature type="domain" description="Macro" evidence="4">
    <location>
        <begin position="1679"/>
        <end position="1860"/>
    </location>
</feature>
<feature type="domain" description="NiRAN" evidence="7">
    <location>
        <begin position="4566"/>
        <end position="4797"/>
    </location>
</feature>
<feature type="domain" description="RdRp catalytic" evidence="5">
    <location>
        <begin position="5105"/>
        <end position="5256"/>
    </location>
</feature>
<feature type="domain" description="CV ZBD" evidence="6">
    <location>
        <begin position="5413"/>
        <end position="5528"/>
    </location>
</feature>
<feature type="domain" description="(+)RNA virus helicase ATP-binding">
    <location>
        <begin position="5633"/>
        <end position="5812"/>
    </location>
</feature>
<feature type="domain" description="(+)RNA virus helicase C-terminal">
    <location>
        <begin position="5813"/>
        <end position="5972"/>
    </location>
</feature>
<feature type="domain" description="ExoN" evidence="8">
    <location>
        <begin position="5970"/>
        <end position="6183"/>
    </location>
</feature>
<feature type="domain" description="NendoU" evidence="10">
    <location>
        <begin position="6451"/>
        <end position="6591"/>
    </location>
</feature>
<feature type="domain" description="Nidovirus-type SAM-dependent 2'-O-MTase" evidence="9">
    <location>
        <begin position="6593"/>
        <end position="6857"/>
    </location>
</feature>
<feature type="region of interest" description="Disordered" evidence="11">
    <location>
        <begin position="2158"/>
        <end position="2191"/>
    </location>
</feature>
<feature type="region of interest" description="HD1">
    <location>
        <begin position="2303"/>
        <end position="2683"/>
    </location>
</feature>
<feature type="region of interest" description="HD2">
    <location>
        <begin position="2889"/>
        <end position="3162"/>
    </location>
</feature>
<feature type="region of interest" description="HD3">
    <location>
        <begin position="3555"/>
        <end position="3738"/>
    </location>
</feature>
<feature type="active site" description="Charge relay system; for 3C-like serine proteinase activity" evidence="12">
    <location>
        <position position="3304"/>
    </location>
</feature>
<feature type="active site" description="Charge relay system; for 3C-like serine proteinase activity" evidence="15">
    <location>
        <position position="3347"/>
    </location>
</feature>
<feature type="active site" description="Charge relay system; for 3C-like serine proteinase activity" evidence="12">
    <location>
        <position position="3416"/>
    </location>
</feature>
<feature type="active site" evidence="8">
    <location>
        <position position="5984"/>
    </location>
</feature>
<feature type="active site" evidence="8">
    <location>
        <position position="5986"/>
    </location>
</feature>
<feature type="active site" evidence="8">
    <location>
        <position position="6085"/>
    </location>
</feature>
<feature type="active site" evidence="8">
    <location>
        <position position="6161"/>
    </location>
</feature>
<feature type="active site" evidence="8">
    <location>
        <position position="6166"/>
    </location>
</feature>
<feature type="active site" evidence="10">
    <location>
        <position position="6487"/>
    </location>
</feature>
<feature type="active site" evidence="10">
    <location>
        <position position="6504"/>
    </location>
</feature>
<feature type="active site" evidence="10">
    <location>
        <position position="6536"/>
    </location>
</feature>
<feature type="active site" evidence="9">
    <location>
        <position position="6633"/>
    </location>
</feature>
<feature type="active site" evidence="9">
    <location>
        <position position="6709"/>
    </location>
</feature>
<feature type="active site" evidence="9">
    <location>
        <position position="6737"/>
    </location>
</feature>
<feature type="active site" evidence="9">
    <location>
        <position position="6771"/>
    </location>
</feature>
<feature type="binding site" evidence="6">
    <location>
        <position position="5417"/>
    </location>
    <ligand>
        <name>Zn(2+)</name>
        <dbReference type="ChEBI" id="CHEBI:29105"/>
        <label>1</label>
    </ligand>
</feature>
<feature type="binding site" evidence="6">
    <location>
        <position position="5420"/>
    </location>
    <ligand>
        <name>Zn(2+)</name>
        <dbReference type="ChEBI" id="CHEBI:29105"/>
        <label>1</label>
    </ligand>
</feature>
<feature type="binding site" evidence="6">
    <location>
        <position position="5428"/>
    </location>
    <ligand>
        <name>Zn(2+)</name>
        <dbReference type="ChEBI" id="CHEBI:29105"/>
        <label>2</label>
    </ligand>
</feature>
<feature type="binding site" evidence="6">
    <location>
        <position position="5431"/>
    </location>
    <ligand>
        <name>Zn(2+)</name>
        <dbReference type="ChEBI" id="CHEBI:29105"/>
        <label>2</label>
    </ligand>
</feature>
<feature type="binding site" evidence="6">
    <location>
        <position position="5438"/>
    </location>
    <ligand>
        <name>Zn(2+)</name>
        <dbReference type="ChEBI" id="CHEBI:29105"/>
        <label>1</label>
    </ligand>
</feature>
<feature type="binding site" evidence="6">
    <location>
        <position position="5441"/>
    </location>
    <ligand>
        <name>Zn(2+)</name>
        <dbReference type="ChEBI" id="CHEBI:29105"/>
        <label>1</label>
    </ligand>
</feature>
<feature type="binding site" evidence="6">
    <location>
        <position position="5445"/>
    </location>
    <ligand>
        <name>Zn(2+)</name>
        <dbReference type="ChEBI" id="CHEBI:29105"/>
        <label>2</label>
    </ligand>
</feature>
<feature type="binding site" evidence="6">
    <location>
        <position position="5451"/>
    </location>
    <ligand>
        <name>Zn(2+)</name>
        <dbReference type="ChEBI" id="CHEBI:29105"/>
        <label>2</label>
    </ligand>
</feature>
<feature type="binding site" evidence="6">
    <location>
        <position position="5460"/>
    </location>
    <ligand>
        <name>Zn(2+)</name>
        <dbReference type="ChEBI" id="CHEBI:29105"/>
        <label>3</label>
    </ligand>
</feature>
<feature type="binding site" evidence="6">
    <location>
        <position position="5462"/>
    </location>
    <ligand>
        <name>Zn(2+)</name>
        <dbReference type="ChEBI" id="CHEBI:29105"/>
        <label>3</label>
    </ligand>
</feature>
<feature type="binding site" evidence="6">
    <location>
        <position position="5483"/>
    </location>
    <ligand>
        <name>Zn(2+)</name>
        <dbReference type="ChEBI" id="CHEBI:29105"/>
        <label>3</label>
    </ligand>
</feature>
<feature type="binding site" evidence="6">
    <location>
        <position position="5486"/>
    </location>
    <ligand>
        <name>Zn(2+)</name>
        <dbReference type="ChEBI" id="CHEBI:29105"/>
        <label>3</label>
    </ligand>
</feature>
<feature type="binding site" evidence="8">
    <location>
        <position position="6149"/>
    </location>
    <ligand>
        <name>Zn(2+)</name>
        <dbReference type="ChEBI" id="CHEBI:29105"/>
        <label>4</label>
    </ligand>
</feature>
<feature type="binding site" evidence="8">
    <location>
        <position position="6153"/>
    </location>
    <ligand>
        <name>Zn(2+)</name>
        <dbReference type="ChEBI" id="CHEBI:29105"/>
        <label>4</label>
    </ligand>
</feature>
<feature type="binding site" evidence="8">
    <location>
        <position position="6157"/>
    </location>
    <ligand>
        <name>Zn(2+)</name>
        <dbReference type="ChEBI" id="CHEBI:29105"/>
        <label>4</label>
    </ligand>
</feature>
<feature type="binding site" evidence="8">
    <location>
        <position position="6172"/>
    </location>
    <ligand>
        <name>Zn(2+)</name>
        <dbReference type="ChEBI" id="CHEBI:29105"/>
        <label>4</label>
    </ligand>
</feature>
<feature type="site" description="Cleavage; by 3C-like serine proteinase" evidence="15">
    <location>
        <begin position="2873"/>
        <end position="2874"/>
    </location>
</feature>
<feature type="site" description="Cleavage; by 3C-like serine proteinase" evidence="12">
    <location>
        <begin position="3251"/>
        <end position="3252"/>
    </location>
</feature>
<feature type="site" description="Cleavage; by 3C-like serine proteinase" evidence="12">
    <location>
        <begin position="3543"/>
        <end position="3544"/>
    </location>
</feature>
<feature type="site" description="Cleavage; by 3C-like serine proteinase" evidence="15">
    <location>
        <begin position="3802"/>
        <end position="3803"/>
    </location>
</feature>
<feature type="site" description="Cleavage; by 3C-like serine proteinase" evidence="15">
    <location>
        <begin position="3979"/>
        <end position="3980"/>
    </location>
</feature>
<feature type="site" description="Cleavage; by 3C-like serine proteinase" evidence="15">
    <location>
        <begin position="4161"/>
        <end position="4162"/>
    </location>
</feature>
<feature type="site" description="Cleavage; by 3C-like serine proteinase" evidence="15">
    <location>
        <begin position="4246"/>
        <end position="4247"/>
    </location>
</feature>
<feature type="site" description="Cleavage; by 3C-like serine proteinase" evidence="15">
    <location>
        <begin position="4399"/>
        <end position="4400"/>
    </location>
</feature>
<feature type="site" description="Cleavage; by 3C-like serine proteinase" evidence="15">
    <location>
        <begin position="5410"/>
        <end position="5411"/>
    </location>
</feature>
<feature type="site" description="Cleavage; by 3C-like serine proteinase" evidence="15">
    <location>
        <begin position="5968"/>
        <end position="5969"/>
    </location>
</feature>
<feature type="site" description="Cleavage; by 3C-like serine proteinase" evidence="15">
    <location>
        <begin position="6298"/>
        <end position="6299"/>
    </location>
</feature>
<feature type="site" description="Cleavage; by 3C-like serine proteinase" evidence="15">
    <location>
        <begin position="6442"/>
        <end position="6443"/>
    </location>
</feature>
<feature type="site" description="Cleavage; by 3C-like serine proteinase" evidence="15">
    <location>
        <begin position="6592"/>
        <end position="6593"/>
    </location>
</feature>
<feature type="mutagenesis site" description="Complete loss of 3C-like serine proteinase activity." evidence="12">
    <original>H</original>
    <variation>G</variation>
    <variation>R</variation>
    <location>
        <position position="3304"/>
    </location>
</feature>
<feature type="mutagenesis site" description="Complete loss of 3C-like serine proteinase activity." evidence="12">
    <original>E</original>
    <variation>A</variation>
    <location>
        <position position="3347"/>
    </location>
</feature>
<feature type="mutagenesis site" description="Complete loss of 3C-like serine proteinase activity." evidence="12">
    <original>S</original>
    <variation>A</variation>
    <location>
        <position position="3416"/>
    </location>
</feature>
<feature type="mutagenesis site" description="Partial loss of 3C-like serine proteinase activity." evidence="12">
    <original>S</original>
    <variation>C</variation>
    <location>
        <position position="3416"/>
    </location>
</feature>
<feature type="sequence conflict" description="In Ref. 2; CAA39493." evidence="14" ref="2">
    <original>RR</original>
    <variation>KK</variation>
    <location>
        <begin position="251"/>
        <end position="252"/>
    </location>
</feature>
<accession>P0C6V7</accession>
<accession>P18458</accession>
<accession>Q1WFM5</accession>
<accession>Q65826</accession>
<accession>Q65827</accession>